<name>KN10A_ORYSJ</name>
<comment type="similarity">
    <text evidence="4">Belongs to the TRAFAC class myosin-kinesin ATPase superfamily. Kinesin family. KIN-10 subfamily.</text>
</comment>
<comment type="sequence caution" evidence="4">
    <conflict type="erroneous gene model prediction">
        <sequence resource="EMBL-CDS" id="BAF10382"/>
    </conflict>
</comment>
<comment type="sequence caution" evidence="4">
    <conflict type="erroneous gene model prediction">
        <sequence resource="EMBL-CDS" id="BAS81509"/>
    </conflict>
</comment>
<comment type="sequence caution" evidence="4">
    <conflict type="erroneous initiation">
        <sequence resource="EMBL-CDS" id="EAZ25028"/>
    </conflict>
    <text>Truncated N-terminus.</text>
</comment>
<feature type="chain" id="PRO_0000437035" description="Kinesin-like protein KIN-10A">
    <location>
        <begin position="1"/>
        <end position="915"/>
    </location>
</feature>
<feature type="domain" description="Kinesin motor" evidence="2">
    <location>
        <begin position="56"/>
        <end position="391"/>
    </location>
</feature>
<feature type="region of interest" description="Disordered" evidence="3">
    <location>
        <begin position="1"/>
        <end position="28"/>
    </location>
</feature>
<feature type="region of interest" description="Disordered" evidence="3">
    <location>
        <begin position="34"/>
        <end position="53"/>
    </location>
</feature>
<feature type="region of interest" description="Disordered" evidence="3">
    <location>
        <begin position="676"/>
        <end position="718"/>
    </location>
</feature>
<feature type="coiled-coil region" evidence="1">
    <location>
        <begin position="426"/>
        <end position="517"/>
    </location>
</feature>
<feature type="compositionally biased region" description="Pro residues" evidence="3">
    <location>
        <begin position="1"/>
        <end position="16"/>
    </location>
</feature>
<feature type="binding site" evidence="2">
    <location>
        <begin position="137"/>
        <end position="144"/>
    </location>
    <ligand>
        <name>ATP</name>
        <dbReference type="ChEBI" id="CHEBI:30616"/>
    </ligand>
</feature>
<reference key="1">
    <citation type="journal article" date="2005" name="Nature">
        <title>The map-based sequence of the rice genome.</title>
        <authorList>
            <consortium name="International rice genome sequencing project (IRGSP)"/>
        </authorList>
    </citation>
    <scope>NUCLEOTIDE SEQUENCE [LARGE SCALE GENOMIC DNA]</scope>
    <source>
        <strain>cv. Nipponbare</strain>
    </source>
</reference>
<reference key="2">
    <citation type="journal article" date="2008" name="Nucleic Acids Res.">
        <title>The rice annotation project database (RAP-DB): 2008 update.</title>
        <authorList>
            <consortium name="The rice annotation project (RAP)"/>
        </authorList>
    </citation>
    <scope>GENOME REANNOTATION</scope>
    <source>
        <strain>cv. Nipponbare</strain>
    </source>
</reference>
<reference key="3">
    <citation type="journal article" date="2013" name="Rice">
        <title>Improvement of the Oryza sativa Nipponbare reference genome using next generation sequence and optical map data.</title>
        <authorList>
            <person name="Kawahara Y."/>
            <person name="de la Bastide M."/>
            <person name="Hamilton J.P."/>
            <person name="Kanamori H."/>
            <person name="McCombie W.R."/>
            <person name="Ouyang S."/>
            <person name="Schwartz D.C."/>
            <person name="Tanaka T."/>
            <person name="Wu J."/>
            <person name="Zhou S."/>
            <person name="Childs K.L."/>
            <person name="Davidson R.M."/>
            <person name="Lin H."/>
            <person name="Quesada-Ocampo L."/>
            <person name="Vaillancourt B."/>
            <person name="Sakai H."/>
            <person name="Lee S.S."/>
            <person name="Kim J."/>
            <person name="Numa H."/>
            <person name="Itoh T."/>
            <person name="Buell C.R."/>
            <person name="Matsumoto T."/>
        </authorList>
    </citation>
    <scope>GENOME REANNOTATION</scope>
    <source>
        <strain>cv. Nipponbare</strain>
    </source>
</reference>
<reference key="4">
    <citation type="journal article" date="2005" name="PLoS Biol.">
        <title>The genomes of Oryza sativa: a history of duplications.</title>
        <authorList>
            <person name="Yu J."/>
            <person name="Wang J."/>
            <person name="Lin W."/>
            <person name="Li S."/>
            <person name="Li H."/>
            <person name="Zhou J."/>
            <person name="Ni P."/>
            <person name="Dong W."/>
            <person name="Hu S."/>
            <person name="Zeng C."/>
            <person name="Zhang J."/>
            <person name="Zhang Y."/>
            <person name="Li R."/>
            <person name="Xu Z."/>
            <person name="Li S."/>
            <person name="Li X."/>
            <person name="Zheng H."/>
            <person name="Cong L."/>
            <person name="Lin L."/>
            <person name="Yin J."/>
            <person name="Geng J."/>
            <person name="Li G."/>
            <person name="Shi J."/>
            <person name="Liu J."/>
            <person name="Lv H."/>
            <person name="Li J."/>
            <person name="Wang J."/>
            <person name="Deng Y."/>
            <person name="Ran L."/>
            <person name="Shi X."/>
            <person name="Wang X."/>
            <person name="Wu Q."/>
            <person name="Li C."/>
            <person name="Ren X."/>
            <person name="Wang J."/>
            <person name="Wang X."/>
            <person name="Li D."/>
            <person name="Liu D."/>
            <person name="Zhang X."/>
            <person name="Ji Z."/>
            <person name="Zhao W."/>
            <person name="Sun Y."/>
            <person name="Zhang Z."/>
            <person name="Bao J."/>
            <person name="Han Y."/>
            <person name="Dong L."/>
            <person name="Ji J."/>
            <person name="Chen P."/>
            <person name="Wu S."/>
            <person name="Liu J."/>
            <person name="Xiao Y."/>
            <person name="Bu D."/>
            <person name="Tan J."/>
            <person name="Yang L."/>
            <person name="Ye C."/>
            <person name="Zhang J."/>
            <person name="Xu J."/>
            <person name="Zhou Y."/>
            <person name="Yu Y."/>
            <person name="Zhang B."/>
            <person name="Zhuang S."/>
            <person name="Wei H."/>
            <person name="Liu B."/>
            <person name="Lei M."/>
            <person name="Yu H."/>
            <person name="Li Y."/>
            <person name="Xu H."/>
            <person name="Wei S."/>
            <person name="He X."/>
            <person name="Fang L."/>
            <person name="Zhang Z."/>
            <person name="Zhang Y."/>
            <person name="Huang X."/>
            <person name="Su Z."/>
            <person name="Tong W."/>
            <person name="Li J."/>
            <person name="Tong Z."/>
            <person name="Li S."/>
            <person name="Ye J."/>
            <person name="Wang L."/>
            <person name="Fang L."/>
            <person name="Lei T."/>
            <person name="Chen C.-S."/>
            <person name="Chen H.-C."/>
            <person name="Xu Z."/>
            <person name="Li H."/>
            <person name="Huang H."/>
            <person name="Zhang F."/>
            <person name="Xu H."/>
            <person name="Li N."/>
            <person name="Zhao C."/>
            <person name="Li S."/>
            <person name="Dong L."/>
            <person name="Huang Y."/>
            <person name="Li L."/>
            <person name="Xi Y."/>
            <person name="Qi Q."/>
            <person name="Li W."/>
            <person name="Zhang B."/>
            <person name="Hu W."/>
            <person name="Zhang Y."/>
            <person name="Tian X."/>
            <person name="Jiao Y."/>
            <person name="Liang X."/>
            <person name="Jin J."/>
            <person name="Gao L."/>
            <person name="Zheng W."/>
            <person name="Hao B."/>
            <person name="Liu S.-M."/>
            <person name="Wang W."/>
            <person name="Yuan L."/>
            <person name="Cao M."/>
            <person name="McDermott J."/>
            <person name="Samudrala R."/>
            <person name="Wang J."/>
            <person name="Wong G.K.-S."/>
            <person name="Yang H."/>
        </authorList>
    </citation>
    <scope>NUCLEOTIDE SEQUENCE [LARGE SCALE GENOMIC DNA]</scope>
    <source>
        <strain>cv. Nipponbare</strain>
    </source>
</reference>
<reference key="5">
    <citation type="journal article" date="2003" name="Science">
        <title>Collection, mapping, and annotation of over 28,000 cDNA clones from japonica rice.</title>
        <authorList>
            <consortium name="The rice full-length cDNA consortium"/>
        </authorList>
    </citation>
    <scope>NUCLEOTIDE SEQUENCE [LARGE SCALE MRNA] OF 710-915</scope>
    <source>
        <strain>cv. Nipponbare</strain>
    </source>
</reference>
<reference key="6">
    <citation type="journal article" date="2009" name="Ann. Bot.">
        <title>Evaluating the microtubule cytoskeleton and its interacting proteins in monocots by mining the rice genome.</title>
        <authorList>
            <person name="Guo L."/>
            <person name="Ho C.M."/>
            <person name="Kong Z."/>
            <person name="Lee Y.R."/>
            <person name="Qian Q."/>
            <person name="Liu B."/>
        </authorList>
    </citation>
    <scope>GENE FAMILY</scope>
    <scope>NOMENCLATURE</scope>
</reference>
<sequence length="915" mass="99275">MAPPTPSPRPGPPPTPQAAMTTPLKTPASKHRLHFPAMTPRNGGGGGAAAGGTEHPVEVIGRIRNLAAGAGGASALEIAGGGTAVRVRGDAGGCRDFTLDGVSVSEEEDLEGFYRRFVRSRIEGVRVGAKCTVMVYGPTGSGKSHTMFGCAKQPGIVYRALRDILEGGGGGGGGVSGGGGEGDGRGEDDAGFGMGLFVQVAVLEIYNEEIYDLLVGSGANAKGNAPKARLEVMGKKAKNATYISGNEAGKISREVAKVEKRRIVKSTLCNERSSRSHCMIILDVPSVGGRLMLVDMAGSENIEAAGQTGFEAKMQTAKINQGNTALKRVVESIANGDSHVPFRDSKLTMLLQDSFEDDKSKILMILCASPDPKELHKTVSTLEYGAKAKCIIRAAHAATPRDKMSSEESSTMLNSRIVAMNQFIYNLQKENKLREKERNEAQSVLRKKEEELAQLRAKLKLIEGQGAAAKEEEINSKVMEKTQSLRTELMKMEEKMLRQQQELLALQQRLKEVEREKPVQQDIIGGRLLARLSEMSARADQSMSMDMSIDFDMGDQPAAQDVKVIKEDTRKQGQIWSQANTAGSCTSAVEQEDDVVRLSGYPEKVVLSTVFEEGDEEEDKDSGVEEEVCKEVVEESYVMQQPLAEPEDPATRNNRIQNIFRLCGNHRELAKKVQSPAKKAFGDENNEPAKQTFGDENKQQPAKRVFGDENKDPSAWGAIEPPMCDVRVTDSPVSSQLSPIVCQVVDDAKLPVSEQLKSCNALEAADENKENNASGQDGLLEVYIKWESGHLIKGLKLLSNSCLSDLRKLLEDHFEEAGSKQQQQFTFLLLGDPSGAPVSREKEAGVPISKLPSCNNQPNSYLACLRAVKKQPATEQMPFSPLESKLNSALNDVHLAALSPKVNPMSPNYIRELRA</sequence>
<organism>
    <name type="scientific">Oryza sativa subsp. japonica</name>
    <name type="common">Rice</name>
    <dbReference type="NCBI Taxonomy" id="39947"/>
    <lineage>
        <taxon>Eukaryota</taxon>
        <taxon>Viridiplantae</taxon>
        <taxon>Streptophyta</taxon>
        <taxon>Embryophyta</taxon>
        <taxon>Tracheophyta</taxon>
        <taxon>Spermatophyta</taxon>
        <taxon>Magnoliopsida</taxon>
        <taxon>Liliopsida</taxon>
        <taxon>Poales</taxon>
        <taxon>Poaceae</taxon>
        <taxon>BOP clade</taxon>
        <taxon>Oryzoideae</taxon>
        <taxon>Oryzeae</taxon>
        <taxon>Oryzinae</taxon>
        <taxon>Oryza</taxon>
        <taxon>Oryza sativa</taxon>
    </lineage>
</organism>
<gene>
    <name evidence="4" type="primary">KIN10A</name>
    <name evidence="7" type="ordered locus">Os02g0810200</name>
    <name evidence="4" type="ordered locus">LOC_Os02g56540</name>
    <name evidence="5" type="ORF">OJ1112_G06.36</name>
    <name evidence="6" type="ORF">OJ1116_E04.2</name>
    <name evidence="8" type="ORF">OsJ_08815</name>
</gene>
<evidence type="ECO:0000255" key="1"/>
<evidence type="ECO:0000255" key="2">
    <source>
        <dbReference type="PROSITE-ProRule" id="PRU00283"/>
    </source>
</evidence>
<evidence type="ECO:0000256" key="3">
    <source>
        <dbReference type="SAM" id="MobiDB-lite"/>
    </source>
</evidence>
<evidence type="ECO:0000305" key="4"/>
<evidence type="ECO:0000312" key="5">
    <source>
        <dbReference type="EMBL" id="BAD19147.1"/>
    </source>
</evidence>
<evidence type="ECO:0000312" key="6">
    <source>
        <dbReference type="EMBL" id="BAD21583.1"/>
    </source>
</evidence>
<evidence type="ECO:0000312" key="7">
    <source>
        <dbReference type="EMBL" id="BAS81509.1"/>
    </source>
</evidence>
<evidence type="ECO:0000312" key="8">
    <source>
        <dbReference type="EMBL" id="EAZ25028.1"/>
    </source>
</evidence>
<protein>
    <recommendedName>
        <fullName evidence="4">Kinesin-like protein KIN-10A</fullName>
    </recommendedName>
</protein>
<accession>Q6K990</accession>
<accession>A3ACI9</accession>
<accession>Q0DWK6</accession>
<proteinExistence type="evidence at transcript level"/>
<keyword id="KW-0067">ATP-binding</keyword>
<keyword id="KW-0175">Coiled coil</keyword>
<keyword id="KW-0493">Microtubule</keyword>
<keyword id="KW-0505">Motor protein</keyword>
<keyword id="KW-0547">Nucleotide-binding</keyword>
<keyword id="KW-1185">Reference proteome</keyword>
<dbReference type="EMBL" id="AP003996">
    <property type="protein sequence ID" value="BAD19147.1"/>
    <property type="molecule type" value="Genomic_DNA"/>
</dbReference>
<dbReference type="EMBL" id="AP004081">
    <property type="protein sequence ID" value="BAD21583.1"/>
    <property type="molecule type" value="Genomic_DNA"/>
</dbReference>
<dbReference type="EMBL" id="AP008208">
    <property type="protein sequence ID" value="BAF10382.1"/>
    <property type="status" value="ALT_SEQ"/>
    <property type="molecule type" value="Genomic_DNA"/>
</dbReference>
<dbReference type="EMBL" id="AP014958">
    <property type="protein sequence ID" value="BAS81509.1"/>
    <property type="status" value="ALT_SEQ"/>
    <property type="molecule type" value="Genomic_DNA"/>
</dbReference>
<dbReference type="EMBL" id="CM000139">
    <property type="protein sequence ID" value="EAZ25028.1"/>
    <property type="status" value="ALT_INIT"/>
    <property type="molecule type" value="Genomic_DNA"/>
</dbReference>
<dbReference type="EMBL" id="AK059635">
    <property type="status" value="NOT_ANNOTATED_CDS"/>
    <property type="molecule type" value="mRNA"/>
</dbReference>
<dbReference type="RefSeq" id="XP_015623810.1">
    <property type="nucleotide sequence ID" value="XM_015768324.1"/>
</dbReference>
<dbReference type="SMR" id="Q6K990"/>
<dbReference type="FunCoup" id="Q6K990">
    <property type="interactions" value="1233"/>
</dbReference>
<dbReference type="STRING" id="39947.Q6K990"/>
<dbReference type="PaxDb" id="39947-Q6K990"/>
<dbReference type="EnsemblPlants" id="Os02t0810200-01">
    <property type="protein sequence ID" value="Os02t0810200-01"/>
    <property type="gene ID" value="Os02g0810200"/>
</dbReference>
<dbReference type="Gramene" id="Os02t0810200-01">
    <property type="protein sequence ID" value="Os02t0810200-01"/>
    <property type="gene ID" value="Os02g0810200"/>
</dbReference>
<dbReference type="KEGG" id="dosa:Os02g0810200"/>
<dbReference type="eggNOG" id="KOG0243">
    <property type="taxonomic scope" value="Eukaryota"/>
</dbReference>
<dbReference type="InParanoid" id="Q6K990"/>
<dbReference type="OrthoDB" id="3176171at2759"/>
<dbReference type="Proteomes" id="UP000000763">
    <property type="component" value="Chromosome 2"/>
</dbReference>
<dbReference type="Proteomes" id="UP000007752">
    <property type="component" value="Chromosome 2"/>
</dbReference>
<dbReference type="Proteomes" id="UP000059680">
    <property type="component" value="Chromosome 2"/>
</dbReference>
<dbReference type="GO" id="GO:0005737">
    <property type="term" value="C:cytoplasm"/>
    <property type="evidence" value="ECO:0000318"/>
    <property type="project" value="GO_Central"/>
</dbReference>
<dbReference type="GO" id="GO:0005871">
    <property type="term" value="C:kinesin complex"/>
    <property type="evidence" value="ECO:0000318"/>
    <property type="project" value="GO_Central"/>
</dbReference>
<dbReference type="GO" id="GO:0005874">
    <property type="term" value="C:microtubule"/>
    <property type="evidence" value="ECO:0000318"/>
    <property type="project" value="GO_Central"/>
</dbReference>
<dbReference type="GO" id="GO:0009524">
    <property type="term" value="C:phragmoplast"/>
    <property type="evidence" value="ECO:0007669"/>
    <property type="project" value="EnsemblPlants"/>
</dbReference>
<dbReference type="GO" id="GO:0005524">
    <property type="term" value="F:ATP binding"/>
    <property type="evidence" value="ECO:0007669"/>
    <property type="project" value="UniProtKB-KW"/>
</dbReference>
<dbReference type="GO" id="GO:0016887">
    <property type="term" value="F:ATP hydrolysis activity"/>
    <property type="evidence" value="ECO:0000318"/>
    <property type="project" value="GO_Central"/>
</dbReference>
<dbReference type="GO" id="GO:0008017">
    <property type="term" value="F:microtubule binding"/>
    <property type="evidence" value="ECO:0000318"/>
    <property type="project" value="GO_Central"/>
</dbReference>
<dbReference type="GO" id="GO:0003777">
    <property type="term" value="F:microtubule motor activity"/>
    <property type="evidence" value="ECO:0000318"/>
    <property type="project" value="GO_Central"/>
</dbReference>
<dbReference type="GO" id="GO:0007018">
    <property type="term" value="P:microtubule-based movement"/>
    <property type="evidence" value="ECO:0000318"/>
    <property type="project" value="GO_Central"/>
</dbReference>
<dbReference type="GO" id="GO:0031535">
    <property type="term" value="P:plus-end directed microtubule sliding"/>
    <property type="evidence" value="ECO:0007669"/>
    <property type="project" value="EnsemblPlants"/>
</dbReference>
<dbReference type="FunFam" id="3.40.850.10:FF:000068">
    <property type="entry name" value="p-loop containing nucleoside triphosphate hydrolase superfamily protein"/>
    <property type="match status" value="1"/>
</dbReference>
<dbReference type="Gene3D" id="3.40.850.10">
    <property type="entry name" value="Kinesin motor domain"/>
    <property type="match status" value="1"/>
</dbReference>
<dbReference type="InterPro" id="IPR027640">
    <property type="entry name" value="Kinesin-like_fam"/>
</dbReference>
<dbReference type="InterPro" id="IPR001752">
    <property type="entry name" value="Kinesin_motor_dom"/>
</dbReference>
<dbReference type="InterPro" id="IPR036961">
    <property type="entry name" value="Kinesin_motor_dom_sf"/>
</dbReference>
<dbReference type="InterPro" id="IPR027417">
    <property type="entry name" value="P-loop_NTPase"/>
</dbReference>
<dbReference type="PANTHER" id="PTHR24115:SF416">
    <property type="entry name" value="KINESIN-LIKE PROTEIN KIN-10A"/>
    <property type="match status" value="1"/>
</dbReference>
<dbReference type="PANTHER" id="PTHR24115">
    <property type="entry name" value="KINESIN-RELATED"/>
    <property type="match status" value="1"/>
</dbReference>
<dbReference type="Pfam" id="PF00225">
    <property type="entry name" value="Kinesin"/>
    <property type="match status" value="1"/>
</dbReference>
<dbReference type="PRINTS" id="PR00380">
    <property type="entry name" value="KINESINHEAVY"/>
</dbReference>
<dbReference type="SMART" id="SM00129">
    <property type="entry name" value="KISc"/>
    <property type="match status" value="1"/>
</dbReference>
<dbReference type="SUPFAM" id="SSF52540">
    <property type="entry name" value="P-loop containing nucleoside triphosphate hydrolases"/>
    <property type="match status" value="1"/>
</dbReference>
<dbReference type="PROSITE" id="PS50067">
    <property type="entry name" value="KINESIN_MOTOR_2"/>
    <property type="match status" value="1"/>
</dbReference>